<protein>
    <recommendedName>
        <fullName evidence="1">Photosystem II reaction center protein Z</fullName>
        <shortName evidence="1">PSII-Z</shortName>
    </recommendedName>
</protein>
<reference key="1">
    <citation type="submission" date="1995-10" db="EMBL/GenBank/DDBJ databases">
        <title>OR2 is cDNA containing the ORF62 from chloroplasts.</title>
        <authorList>
            <person name="Loebler M."/>
        </authorList>
    </citation>
    <scope>NUCLEOTIDE SEQUENCE [MRNA]</scope>
    <source>
        <strain>cv. Salome</strain>
        <tissue>Leaf</tissue>
    </source>
</reference>
<reference key="2">
    <citation type="journal article" date="2007" name="Theor. Appl. Genet.">
        <title>Complete chloroplast genome sequences of Hordeum vulgare, Sorghum bicolor and Agrostis stolonifera, and comparative analyses with other grass genomes.</title>
        <authorList>
            <person name="Saski C."/>
            <person name="Lee S.-B."/>
            <person name="Fjellheim S."/>
            <person name="Guda C."/>
            <person name="Jansen R.K."/>
            <person name="Luo H."/>
            <person name="Tomkins J."/>
            <person name="Rognli O.A."/>
            <person name="Daniell H."/>
            <person name="Clarke J.L."/>
        </authorList>
    </citation>
    <scope>NUCLEOTIDE SEQUENCE [LARGE SCALE GENOMIC DNA]</scope>
    <source>
        <strain>cv. Morex</strain>
    </source>
</reference>
<dbReference type="EMBL" id="U37703">
    <property type="protein sequence ID" value="AAA79707.1"/>
    <property type="status" value="ALT_INIT"/>
    <property type="molecule type" value="mRNA"/>
</dbReference>
<dbReference type="EMBL" id="EF115541">
    <property type="protein sequence ID" value="ABK79400.1"/>
    <property type="molecule type" value="Genomic_DNA"/>
</dbReference>
<dbReference type="PIR" id="T04410">
    <property type="entry name" value="T04410"/>
</dbReference>
<dbReference type="RefSeq" id="YP_010144412.1">
    <property type="nucleotide sequence ID" value="NC_056985.1"/>
</dbReference>
<dbReference type="RefSeq" id="YP_874640.1">
    <property type="nucleotide sequence ID" value="NC_008590.1"/>
</dbReference>
<dbReference type="SMR" id="P69696"/>
<dbReference type="GeneID" id="4525154"/>
<dbReference type="GeneID" id="67140732"/>
<dbReference type="GO" id="GO:0009535">
    <property type="term" value="C:chloroplast thylakoid membrane"/>
    <property type="evidence" value="ECO:0007669"/>
    <property type="project" value="UniProtKB-SubCell"/>
</dbReference>
<dbReference type="GO" id="GO:0009539">
    <property type="term" value="C:photosystem II reaction center"/>
    <property type="evidence" value="ECO:0007669"/>
    <property type="project" value="InterPro"/>
</dbReference>
<dbReference type="GO" id="GO:0015979">
    <property type="term" value="P:photosynthesis"/>
    <property type="evidence" value="ECO:0007669"/>
    <property type="project" value="UniProtKB-UniRule"/>
</dbReference>
<dbReference type="GO" id="GO:0042549">
    <property type="term" value="P:photosystem II stabilization"/>
    <property type="evidence" value="ECO:0007669"/>
    <property type="project" value="InterPro"/>
</dbReference>
<dbReference type="FunFam" id="1.10.287.740:FF:000001">
    <property type="entry name" value="Photosystem II reaction center protein Z"/>
    <property type="match status" value="1"/>
</dbReference>
<dbReference type="Gene3D" id="1.10.287.740">
    <property type="entry name" value="Photosystem II PsbZ, reaction centre"/>
    <property type="match status" value="1"/>
</dbReference>
<dbReference type="HAMAP" id="MF_00644">
    <property type="entry name" value="PSII_PsbZ"/>
    <property type="match status" value="1"/>
</dbReference>
<dbReference type="InterPro" id="IPR002644">
    <property type="entry name" value="PSII_PsbZ"/>
</dbReference>
<dbReference type="InterPro" id="IPR036512">
    <property type="entry name" value="PSII_PsbZ_sf"/>
</dbReference>
<dbReference type="NCBIfam" id="TIGR03043">
    <property type="entry name" value="PS_II_psbZ"/>
    <property type="match status" value="1"/>
</dbReference>
<dbReference type="PANTHER" id="PTHR34971">
    <property type="entry name" value="PHOTOSYSTEM II REACTION CENTER PROTEIN Z"/>
    <property type="match status" value="1"/>
</dbReference>
<dbReference type="PANTHER" id="PTHR34971:SF2">
    <property type="entry name" value="PHOTOSYSTEM II REACTION CENTER PROTEIN Z"/>
    <property type="match status" value="1"/>
</dbReference>
<dbReference type="Pfam" id="PF01737">
    <property type="entry name" value="Ycf9"/>
    <property type="match status" value="1"/>
</dbReference>
<dbReference type="SUPFAM" id="SSF161055">
    <property type="entry name" value="PsbZ-like"/>
    <property type="match status" value="1"/>
</dbReference>
<accession>P69696</accession>
<accession>A1E9H8</accession>
<accession>P08890</accession>
<accession>Q40003</accession>
<feature type="chain" id="PRO_0000217706" description="Photosystem II reaction center protein Z">
    <location>
        <begin position="1"/>
        <end position="62"/>
    </location>
</feature>
<feature type="transmembrane region" description="Helical" evidence="1">
    <location>
        <begin position="8"/>
        <end position="28"/>
    </location>
</feature>
<feature type="transmembrane region" description="Helical" evidence="1">
    <location>
        <begin position="41"/>
        <end position="61"/>
    </location>
</feature>
<geneLocation type="chloroplast"/>
<organism>
    <name type="scientific">Hordeum vulgare</name>
    <name type="common">Barley</name>
    <dbReference type="NCBI Taxonomy" id="4513"/>
    <lineage>
        <taxon>Eukaryota</taxon>
        <taxon>Viridiplantae</taxon>
        <taxon>Streptophyta</taxon>
        <taxon>Embryophyta</taxon>
        <taxon>Tracheophyta</taxon>
        <taxon>Spermatophyta</taxon>
        <taxon>Magnoliopsida</taxon>
        <taxon>Liliopsida</taxon>
        <taxon>Poales</taxon>
        <taxon>Poaceae</taxon>
        <taxon>BOP clade</taxon>
        <taxon>Pooideae</taxon>
        <taxon>Triticodae</taxon>
        <taxon>Triticeae</taxon>
        <taxon>Hordeinae</taxon>
        <taxon>Hordeum</taxon>
    </lineage>
</organism>
<evidence type="ECO:0000255" key="1">
    <source>
        <dbReference type="HAMAP-Rule" id="MF_00644"/>
    </source>
</evidence>
<evidence type="ECO:0000305" key="2"/>
<gene>
    <name evidence="1" type="primary">psbZ</name>
    <name type="synonym">ycf9</name>
</gene>
<proteinExistence type="inferred from homology"/>
<comment type="function">
    <text evidence="1">May control the interaction of photosystem II (PSII) cores with the light-harvesting antenna, regulates electron flow through the 2 photosystem reaction centers. PSII is a light-driven water plastoquinone oxidoreductase, using light energy to abstract electrons from H(2)O, generating a proton gradient subsequently used for ATP formation.</text>
</comment>
<comment type="subunit">
    <text evidence="1">PSII is composed of 1 copy each of membrane proteins PsbA, PsbB, PsbC, PsbD, PsbE, PsbF, PsbH, PsbI, PsbJ, PsbK, PsbL, PsbM, PsbT, PsbY, PsbZ, Psb30/Ycf12, at least 3 peripheral proteins of the oxygen-evolving complex and a large number of cofactors. It forms dimeric complexes.</text>
</comment>
<comment type="subcellular location">
    <subcellularLocation>
        <location evidence="1">Plastid</location>
        <location evidence="1">Chloroplast thylakoid membrane</location>
        <topology evidence="1">Multi-pass membrane protein</topology>
    </subcellularLocation>
</comment>
<comment type="similarity">
    <text evidence="1">Belongs to the PsbZ family.</text>
</comment>
<comment type="sequence caution" evidence="2">
    <conflict type="erroneous initiation">
        <sequence resource="EMBL-CDS" id="AAA79707"/>
    </conflict>
    <text>Extended N-terminus.</text>
</comment>
<keyword id="KW-0150">Chloroplast</keyword>
<keyword id="KW-0472">Membrane</keyword>
<keyword id="KW-0602">Photosynthesis</keyword>
<keyword id="KW-0604">Photosystem II</keyword>
<keyword id="KW-0934">Plastid</keyword>
<keyword id="KW-0674">Reaction center</keyword>
<keyword id="KW-0793">Thylakoid</keyword>
<keyword id="KW-0812">Transmembrane</keyword>
<keyword id="KW-1133">Transmembrane helix</keyword>
<name>PSBZ_HORVU</name>
<sequence>MTIAFQLAVFALIATSSVLVISVPLVFASPDGWSNNKNVVFSGTSLWIGLVFLVAILNSLIS</sequence>